<proteinExistence type="inferred from homology"/>
<name>KCY2_BORAP</name>
<gene>
    <name evidence="1" type="primary">cmk2</name>
    <name type="ordered locus">BAPKO_0872</name>
    <name type="ordered locus">BafPKo_0847</name>
</gene>
<accession>Q0SM32</accession>
<accession>G0IS01</accession>
<reference key="1">
    <citation type="journal article" date="2006" name="BMC Genomics">
        <title>Comparative genome analysis: selection pressure on the Borrelia vls cassettes is essential for infectivity.</title>
        <authorList>
            <person name="Gloeckner G."/>
            <person name="Schulte-Spechtel U."/>
            <person name="Schilhabel M."/>
            <person name="Felder M."/>
            <person name="Suehnel J."/>
            <person name="Wilske B."/>
            <person name="Platzer M."/>
        </authorList>
    </citation>
    <scope>NUCLEOTIDE SEQUENCE [LARGE SCALE GENOMIC DNA]</scope>
    <source>
        <strain>PKo</strain>
    </source>
</reference>
<reference key="2">
    <citation type="journal article" date="2011" name="J. Bacteriol.">
        <title>Whole-genome sequences of two Borrelia afzelii and two Borrelia garinii Lyme disease agent isolates.</title>
        <authorList>
            <person name="Casjens S.R."/>
            <person name="Mongodin E.F."/>
            <person name="Qiu W.G."/>
            <person name="Dunn J.J."/>
            <person name="Luft B.J."/>
            <person name="Fraser-Liggett C.M."/>
            <person name="Schutzer S.E."/>
        </authorList>
    </citation>
    <scope>NUCLEOTIDE SEQUENCE [LARGE SCALE GENOMIC DNA]</scope>
    <source>
        <strain>PKo</strain>
    </source>
</reference>
<feature type="chain" id="PRO_1000005666" description="Cytidylate kinase 2">
    <location>
        <begin position="1"/>
        <end position="178"/>
    </location>
</feature>
<feature type="binding site" evidence="1">
    <location>
        <begin position="7"/>
        <end position="15"/>
    </location>
    <ligand>
        <name>ATP</name>
        <dbReference type="ChEBI" id="CHEBI:30616"/>
    </ligand>
</feature>
<comment type="catalytic activity">
    <reaction evidence="1">
        <text>CMP + ATP = CDP + ADP</text>
        <dbReference type="Rhea" id="RHEA:11600"/>
        <dbReference type="ChEBI" id="CHEBI:30616"/>
        <dbReference type="ChEBI" id="CHEBI:58069"/>
        <dbReference type="ChEBI" id="CHEBI:60377"/>
        <dbReference type="ChEBI" id="CHEBI:456216"/>
        <dbReference type="EC" id="2.7.4.25"/>
    </reaction>
</comment>
<comment type="catalytic activity">
    <reaction evidence="1">
        <text>dCMP + ATP = dCDP + ADP</text>
        <dbReference type="Rhea" id="RHEA:25094"/>
        <dbReference type="ChEBI" id="CHEBI:30616"/>
        <dbReference type="ChEBI" id="CHEBI:57566"/>
        <dbReference type="ChEBI" id="CHEBI:58593"/>
        <dbReference type="ChEBI" id="CHEBI:456216"/>
        <dbReference type="EC" id="2.7.4.25"/>
    </reaction>
</comment>
<comment type="subcellular location">
    <subcellularLocation>
        <location evidence="1">Cytoplasm</location>
    </subcellularLocation>
</comment>
<comment type="similarity">
    <text evidence="1">Belongs to the cytidylate kinase family. Type 2 subfamily.</text>
</comment>
<protein>
    <recommendedName>
        <fullName evidence="1">Cytidylate kinase 2</fullName>
        <shortName evidence="1">CK 2</shortName>
        <ecNumber evidence="1">2.7.4.25</ecNumber>
    </recommendedName>
    <alternativeName>
        <fullName evidence="1">Cytidine monophosphate kinase 2</fullName>
        <shortName evidence="1">CMP kinase 2</shortName>
    </alternativeName>
</protein>
<evidence type="ECO:0000255" key="1">
    <source>
        <dbReference type="HAMAP-Rule" id="MF_00239"/>
    </source>
</evidence>
<sequence length="178" mass="20878">MKIALSGKSGCGNTTVSSMIAKHYGLEFINYTFHDIARERNIPFSEFYEKEIIGRDDYYWDRYLDKRLFALSKKNNTVLASRLAIWISKSADLKIYLYAKMEVRAERIMTREGGMYSDVLSSTFNRDENDKKRYLAIYNIDIDDYSSETDLVIDVTNINSNEVFELIRDEIDKRNLKN</sequence>
<dbReference type="EC" id="2.7.4.25" evidence="1"/>
<dbReference type="EMBL" id="CP000395">
    <property type="protein sequence ID" value="ABH02096.1"/>
    <property type="molecule type" value="Genomic_DNA"/>
</dbReference>
<dbReference type="EMBL" id="CP002933">
    <property type="protein sequence ID" value="AEL70036.1"/>
    <property type="molecule type" value="Genomic_DNA"/>
</dbReference>
<dbReference type="RefSeq" id="WP_011601251.1">
    <property type="nucleotide sequence ID" value="NC_008277.1"/>
</dbReference>
<dbReference type="SMR" id="Q0SM32"/>
<dbReference type="STRING" id="29518.BLA32_00125"/>
<dbReference type="KEGG" id="baf:BAPKO_0872"/>
<dbReference type="KEGG" id="bafz:BafPKo_0847"/>
<dbReference type="PATRIC" id="fig|390236.22.peg.808"/>
<dbReference type="eggNOG" id="COG1102">
    <property type="taxonomic scope" value="Bacteria"/>
</dbReference>
<dbReference type="HOGENOM" id="CLU_079959_1_0_12"/>
<dbReference type="OrthoDB" id="5291502at2"/>
<dbReference type="Proteomes" id="UP000005216">
    <property type="component" value="Chromosome"/>
</dbReference>
<dbReference type="GO" id="GO:0005737">
    <property type="term" value="C:cytoplasm"/>
    <property type="evidence" value="ECO:0007669"/>
    <property type="project" value="UniProtKB-SubCell"/>
</dbReference>
<dbReference type="GO" id="GO:0005524">
    <property type="term" value="F:ATP binding"/>
    <property type="evidence" value="ECO:0007669"/>
    <property type="project" value="UniProtKB-UniRule"/>
</dbReference>
<dbReference type="GO" id="GO:0036430">
    <property type="term" value="F:CMP kinase activity"/>
    <property type="evidence" value="ECO:0007669"/>
    <property type="project" value="RHEA"/>
</dbReference>
<dbReference type="GO" id="GO:0036431">
    <property type="term" value="F:dCMP kinase activity"/>
    <property type="evidence" value="ECO:0007669"/>
    <property type="project" value="RHEA"/>
</dbReference>
<dbReference type="GO" id="GO:0006220">
    <property type="term" value="P:pyrimidine nucleotide metabolic process"/>
    <property type="evidence" value="ECO:0007669"/>
    <property type="project" value="UniProtKB-UniRule"/>
</dbReference>
<dbReference type="CDD" id="cd02020">
    <property type="entry name" value="CMPK"/>
    <property type="match status" value="1"/>
</dbReference>
<dbReference type="Gene3D" id="3.40.50.300">
    <property type="entry name" value="P-loop containing nucleotide triphosphate hydrolases"/>
    <property type="match status" value="1"/>
</dbReference>
<dbReference type="HAMAP" id="MF_00239">
    <property type="entry name" value="Cytidyl_kinase_type2"/>
    <property type="match status" value="1"/>
</dbReference>
<dbReference type="InterPro" id="IPR011892">
    <property type="entry name" value="Cyt_kin_arch"/>
</dbReference>
<dbReference type="InterPro" id="IPR011994">
    <property type="entry name" value="Cytidylate_kinase_dom"/>
</dbReference>
<dbReference type="InterPro" id="IPR027417">
    <property type="entry name" value="P-loop_NTPase"/>
</dbReference>
<dbReference type="NCBIfam" id="TIGR02173">
    <property type="entry name" value="cyt_kin_arch"/>
    <property type="match status" value="1"/>
</dbReference>
<dbReference type="Pfam" id="PF13189">
    <property type="entry name" value="Cytidylate_kin2"/>
    <property type="match status" value="1"/>
</dbReference>
<dbReference type="SUPFAM" id="SSF52540">
    <property type="entry name" value="P-loop containing nucleoside triphosphate hydrolases"/>
    <property type="match status" value="1"/>
</dbReference>
<keyword id="KW-0067">ATP-binding</keyword>
<keyword id="KW-0963">Cytoplasm</keyword>
<keyword id="KW-0418">Kinase</keyword>
<keyword id="KW-0547">Nucleotide-binding</keyword>
<keyword id="KW-0808">Transferase</keyword>
<organism>
    <name type="scientific">Borreliella afzelii (strain PKo)</name>
    <name type="common">Borrelia afzelii</name>
    <dbReference type="NCBI Taxonomy" id="390236"/>
    <lineage>
        <taxon>Bacteria</taxon>
        <taxon>Pseudomonadati</taxon>
        <taxon>Spirochaetota</taxon>
        <taxon>Spirochaetia</taxon>
        <taxon>Spirochaetales</taxon>
        <taxon>Borreliaceae</taxon>
        <taxon>Borreliella</taxon>
    </lineage>
</organism>